<evidence type="ECO:0000255" key="1">
    <source>
        <dbReference type="HAMAP-Rule" id="MF_01033"/>
    </source>
</evidence>
<comment type="function">
    <text evidence="1">Catalyzes the oxidation of 3-carboxy-2-hydroxy-4-methylpentanoate (3-isopropylmalate) to 3-carboxy-4-methyl-2-oxopentanoate. The product decarboxylates to 4-methyl-2 oxopentanoate.</text>
</comment>
<comment type="catalytic activity">
    <reaction evidence="1">
        <text>(2R,3S)-3-isopropylmalate + NAD(+) = 4-methyl-2-oxopentanoate + CO2 + NADH</text>
        <dbReference type="Rhea" id="RHEA:32271"/>
        <dbReference type="ChEBI" id="CHEBI:16526"/>
        <dbReference type="ChEBI" id="CHEBI:17865"/>
        <dbReference type="ChEBI" id="CHEBI:35121"/>
        <dbReference type="ChEBI" id="CHEBI:57540"/>
        <dbReference type="ChEBI" id="CHEBI:57945"/>
        <dbReference type="EC" id="1.1.1.85"/>
    </reaction>
</comment>
<comment type="cofactor">
    <cofactor evidence="1">
        <name>Mg(2+)</name>
        <dbReference type="ChEBI" id="CHEBI:18420"/>
    </cofactor>
    <cofactor evidence="1">
        <name>Mn(2+)</name>
        <dbReference type="ChEBI" id="CHEBI:29035"/>
    </cofactor>
    <text evidence="1">Binds 1 Mg(2+) or Mn(2+) ion per subunit.</text>
</comment>
<comment type="pathway">
    <text evidence="1">Amino-acid biosynthesis; L-leucine biosynthesis; L-leucine from 3-methyl-2-oxobutanoate: step 3/4.</text>
</comment>
<comment type="subunit">
    <text evidence="1">Homodimer.</text>
</comment>
<comment type="subcellular location">
    <subcellularLocation>
        <location evidence="1">Cytoplasm</location>
    </subcellularLocation>
</comment>
<comment type="similarity">
    <text evidence="1">Belongs to the isocitrate and isopropylmalate dehydrogenases family. LeuB type 1 subfamily.</text>
</comment>
<sequence>MAQHRVVLLPGDGIGPEITAVARQLLEVVSRRHGFSLSFEEQPIGGSAIDATGEPLPASTLDACKAADAVLLAAIGSPCFDSLPREKRPETGLLGLRAGMELFANLRPVKIVPALIDASSLKREVIEGVDLMVVRELTGGIYFGQPKGRIETEGDERGFNTMTYSASEVDRIAKVAFEIAQERRGRLCSVDKANVLDVSQLWRDRVDAMAPSYGPVEVSHMYVDNAAMQLVRDPRQFDVLLTGNLFGDILSDEAAMLTGSIGMLPSASLGSEGPGLFEPVHGSAPDIAGQDKANPMAMVLSAAMMLRIGLKQAAAADDLEAAVDAVLAGGFRTGDLMAEGCTQLGCRAMGEQLLKAL</sequence>
<keyword id="KW-0028">Amino-acid biosynthesis</keyword>
<keyword id="KW-0100">Branched-chain amino acid biosynthesis</keyword>
<keyword id="KW-0963">Cytoplasm</keyword>
<keyword id="KW-0432">Leucine biosynthesis</keyword>
<keyword id="KW-0460">Magnesium</keyword>
<keyword id="KW-0464">Manganese</keyword>
<keyword id="KW-0479">Metal-binding</keyword>
<keyword id="KW-0520">NAD</keyword>
<keyword id="KW-0560">Oxidoreductase</keyword>
<protein>
    <recommendedName>
        <fullName evidence="1">3-isopropylmalate dehydrogenase</fullName>
        <ecNumber evidence="1">1.1.1.85</ecNumber>
    </recommendedName>
    <alternativeName>
        <fullName evidence="1">3-IPM-DH</fullName>
    </alternativeName>
    <alternativeName>
        <fullName evidence="1">Beta-IPM dehydrogenase</fullName>
        <shortName evidence="1">IMDH</shortName>
    </alternativeName>
</protein>
<name>LEU3_SYNSC</name>
<gene>
    <name evidence="1" type="primary">leuB</name>
    <name type="ordered locus">Syncc9605_1865</name>
</gene>
<dbReference type="EC" id="1.1.1.85" evidence="1"/>
<dbReference type="EMBL" id="CP000110">
    <property type="protein sequence ID" value="ABB35608.1"/>
    <property type="molecule type" value="Genomic_DNA"/>
</dbReference>
<dbReference type="RefSeq" id="WP_011364817.1">
    <property type="nucleotide sequence ID" value="NC_007516.1"/>
</dbReference>
<dbReference type="SMR" id="Q3AIH4"/>
<dbReference type="STRING" id="110662.Syncc9605_1865"/>
<dbReference type="KEGG" id="syd:Syncc9605_1865"/>
<dbReference type="eggNOG" id="COG0473">
    <property type="taxonomic scope" value="Bacteria"/>
</dbReference>
<dbReference type="HOGENOM" id="CLU_031953_0_3_3"/>
<dbReference type="OrthoDB" id="9806254at2"/>
<dbReference type="UniPathway" id="UPA00048">
    <property type="reaction ID" value="UER00072"/>
</dbReference>
<dbReference type="GO" id="GO:0005829">
    <property type="term" value="C:cytosol"/>
    <property type="evidence" value="ECO:0007669"/>
    <property type="project" value="TreeGrafter"/>
</dbReference>
<dbReference type="GO" id="GO:0003862">
    <property type="term" value="F:3-isopropylmalate dehydrogenase activity"/>
    <property type="evidence" value="ECO:0007669"/>
    <property type="project" value="UniProtKB-UniRule"/>
</dbReference>
<dbReference type="GO" id="GO:0000287">
    <property type="term" value="F:magnesium ion binding"/>
    <property type="evidence" value="ECO:0007669"/>
    <property type="project" value="InterPro"/>
</dbReference>
<dbReference type="GO" id="GO:0051287">
    <property type="term" value="F:NAD binding"/>
    <property type="evidence" value="ECO:0007669"/>
    <property type="project" value="InterPro"/>
</dbReference>
<dbReference type="GO" id="GO:0009098">
    <property type="term" value="P:L-leucine biosynthetic process"/>
    <property type="evidence" value="ECO:0007669"/>
    <property type="project" value="UniProtKB-UniRule"/>
</dbReference>
<dbReference type="FunFam" id="3.40.718.10:FF:000028">
    <property type="entry name" value="3-isopropylmalate dehydrogenase"/>
    <property type="match status" value="1"/>
</dbReference>
<dbReference type="Gene3D" id="3.40.718.10">
    <property type="entry name" value="Isopropylmalate Dehydrogenase"/>
    <property type="match status" value="1"/>
</dbReference>
<dbReference type="HAMAP" id="MF_01033">
    <property type="entry name" value="LeuB_type1"/>
    <property type="match status" value="1"/>
</dbReference>
<dbReference type="InterPro" id="IPR019818">
    <property type="entry name" value="IsoCit/isopropylmalate_DH_CS"/>
</dbReference>
<dbReference type="InterPro" id="IPR024084">
    <property type="entry name" value="IsoPropMal-DH-like_dom"/>
</dbReference>
<dbReference type="InterPro" id="IPR004429">
    <property type="entry name" value="Isopropylmalate_DH"/>
</dbReference>
<dbReference type="NCBIfam" id="TIGR00169">
    <property type="entry name" value="leuB"/>
    <property type="match status" value="1"/>
</dbReference>
<dbReference type="PANTHER" id="PTHR42979">
    <property type="entry name" value="3-ISOPROPYLMALATE DEHYDROGENASE"/>
    <property type="match status" value="1"/>
</dbReference>
<dbReference type="PANTHER" id="PTHR42979:SF1">
    <property type="entry name" value="3-ISOPROPYLMALATE DEHYDROGENASE"/>
    <property type="match status" value="1"/>
</dbReference>
<dbReference type="Pfam" id="PF00180">
    <property type="entry name" value="Iso_dh"/>
    <property type="match status" value="1"/>
</dbReference>
<dbReference type="SMART" id="SM01329">
    <property type="entry name" value="Iso_dh"/>
    <property type="match status" value="1"/>
</dbReference>
<dbReference type="SUPFAM" id="SSF53659">
    <property type="entry name" value="Isocitrate/Isopropylmalate dehydrogenase-like"/>
    <property type="match status" value="1"/>
</dbReference>
<dbReference type="PROSITE" id="PS00470">
    <property type="entry name" value="IDH_IMDH"/>
    <property type="match status" value="1"/>
</dbReference>
<accession>Q3AIH4</accession>
<reference key="1">
    <citation type="submission" date="2005-07" db="EMBL/GenBank/DDBJ databases">
        <title>Complete sequence of Synechococcus sp. CC9605.</title>
        <authorList>
            <consortium name="US DOE Joint Genome Institute"/>
            <person name="Copeland A."/>
            <person name="Lucas S."/>
            <person name="Lapidus A."/>
            <person name="Barry K."/>
            <person name="Detter J.C."/>
            <person name="Glavina T."/>
            <person name="Hammon N."/>
            <person name="Israni S."/>
            <person name="Pitluck S."/>
            <person name="Schmutz J."/>
            <person name="Martinez M."/>
            <person name="Larimer F."/>
            <person name="Land M."/>
            <person name="Kyrpides N."/>
            <person name="Ivanova N."/>
            <person name="Richardson P."/>
        </authorList>
    </citation>
    <scope>NUCLEOTIDE SEQUENCE [LARGE SCALE GENOMIC DNA]</scope>
    <source>
        <strain>CC9605</strain>
    </source>
</reference>
<proteinExistence type="inferred from homology"/>
<feature type="chain" id="PRO_0000250142" description="3-isopropylmalate dehydrogenase">
    <location>
        <begin position="1"/>
        <end position="357"/>
    </location>
</feature>
<feature type="binding site" evidence="1">
    <location>
        <position position="97"/>
    </location>
    <ligand>
        <name>substrate</name>
    </ligand>
</feature>
<feature type="binding site" evidence="1">
    <location>
        <position position="107"/>
    </location>
    <ligand>
        <name>substrate</name>
    </ligand>
</feature>
<feature type="binding site" evidence="1">
    <location>
        <position position="135"/>
    </location>
    <ligand>
        <name>substrate</name>
    </ligand>
</feature>
<feature type="binding site" evidence="1">
    <location>
        <position position="224"/>
    </location>
    <ligand>
        <name>Mg(2+)</name>
        <dbReference type="ChEBI" id="CHEBI:18420"/>
    </ligand>
</feature>
<feature type="binding site" evidence="1">
    <location>
        <position position="224"/>
    </location>
    <ligand>
        <name>substrate</name>
    </ligand>
</feature>
<feature type="binding site" evidence="1">
    <location>
        <position position="248"/>
    </location>
    <ligand>
        <name>Mg(2+)</name>
        <dbReference type="ChEBI" id="CHEBI:18420"/>
    </ligand>
</feature>
<feature type="binding site" evidence="1">
    <location>
        <position position="252"/>
    </location>
    <ligand>
        <name>Mg(2+)</name>
        <dbReference type="ChEBI" id="CHEBI:18420"/>
    </ligand>
</feature>
<feature type="binding site" evidence="1">
    <location>
        <begin position="282"/>
        <end position="294"/>
    </location>
    <ligand>
        <name>NAD(+)</name>
        <dbReference type="ChEBI" id="CHEBI:57540"/>
    </ligand>
</feature>
<feature type="site" description="Important for catalysis" evidence="1">
    <location>
        <position position="142"/>
    </location>
</feature>
<feature type="site" description="Important for catalysis" evidence="1">
    <location>
        <position position="192"/>
    </location>
</feature>
<organism>
    <name type="scientific">Synechococcus sp. (strain CC9605)</name>
    <dbReference type="NCBI Taxonomy" id="110662"/>
    <lineage>
        <taxon>Bacteria</taxon>
        <taxon>Bacillati</taxon>
        <taxon>Cyanobacteriota</taxon>
        <taxon>Cyanophyceae</taxon>
        <taxon>Synechococcales</taxon>
        <taxon>Synechococcaceae</taxon>
        <taxon>Synechococcus</taxon>
    </lineage>
</organism>